<organism evidence="23">
    <name type="scientific">Populus tremula x Populus tremuloides</name>
    <name type="common">Hybrid aspen</name>
    <dbReference type="NCBI Taxonomy" id="47664"/>
    <lineage>
        <taxon>Eukaryota</taxon>
        <taxon>Viridiplantae</taxon>
        <taxon>Streptophyta</taxon>
        <taxon>Embryophyta</taxon>
        <taxon>Tracheophyta</taxon>
        <taxon>Spermatophyta</taxon>
        <taxon>Magnoliopsida</taxon>
        <taxon>eudicotyledons</taxon>
        <taxon>Gunneridae</taxon>
        <taxon>Pentapetalae</taxon>
        <taxon>rosids</taxon>
        <taxon>fabids</taxon>
        <taxon>Malpighiales</taxon>
        <taxon>Salicaceae</taxon>
        <taxon>Saliceae</taxon>
        <taxon>Populus</taxon>
    </lineage>
</organism>
<reference evidence="23" key="1">
    <citation type="journal article" date="2002" name="Plant Cell">
        <title>Xyloglucan endotransglycosylases have a function during the formation of secondary cell walls of vascular tissues.</title>
        <authorList>
            <person name="Bourquin V."/>
            <person name="Nishikubo N."/>
            <person name="Abe H."/>
            <person name="Brumer H."/>
            <person name="Denman S."/>
            <person name="Eklund M."/>
            <person name="Christiernin M."/>
            <person name="Teeri T.T."/>
            <person name="Sundberg B."/>
            <person name="Mellerowicz E.J."/>
        </authorList>
    </citation>
    <scope>NUCLEOTIDE SEQUENCE [MRNA]</scope>
    <scope>FUNCTION</scope>
    <scope>SUBCELLULAR LOCATION</scope>
    <scope>TISSUE SPECIFICITY</scope>
    <scope>DEVELOPMENTAL STAGE</scope>
    <scope>PHYLOGENETIC ANALYSIS</scope>
</reference>
<reference key="2">
    <citation type="journal article" date="2003" name="Acta Crystallogr. D">
        <title>Crystallization and preliminary X-ray analysis of a xyloglucan endotransglycosylase from Populus tremula x tremuloides.</title>
        <authorList>
            <person name="Johansson P."/>
            <person name="Denman S."/>
            <person name="Brumer H."/>
            <person name="Kallas A.M."/>
            <person name="Henriksson H."/>
            <person name="Bergfors T."/>
            <person name="Teeri T.T."/>
            <person name="Jones T.A."/>
        </authorList>
    </citation>
    <scope>FUNCTION</scope>
    <scope>CATALYTIC ACTIVITY</scope>
    <scope>CRYSTALLIZATION</scope>
</reference>
<reference key="3">
    <citation type="journal article" date="2004" name="J. Am. Chem. Soc.">
        <title>Activation of crystalline cellulose surfaces through the chemoenzymatic modification of xyloglucan.</title>
        <authorList>
            <person name="Brumer H. III"/>
            <person name="Zhou Q."/>
            <person name="Baumann M.J."/>
            <person name="Carlsson K."/>
            <person name="Teeri T.T."/>
        </authorList>
    </citation>
    <scope>FUNCTION</scope>
    <scope>CATALYTIC ACTIVITY</scope>
    <scope>BIOTECHNOLOGY</scope>
</reference>
<reference key="4">
    <citation type="journal article" date="2005" name="Appl. Biochem. Biotechnol.">
        <title>Production of poplar xyloglucan endotransglycosylase using the methylotrophic yeast Pichia pastoris.</title>
        <authorList>
            <person name="Bollok M."/>
            <person name="Henriksson H."/>
            <person name="Kallas A."/>
            <person name="Jahic M."/>
            <person name="Teeri T.T."/>
            <person name="Enfors S.O."/>
        </authorList>
    </citation>
    <scope>FUNCTION</scope>
    <scope>CATALYTIC ACTIVITY</scope>
</reference>
<reference key="5">
    <citation type="journal article" date="2005" name="Biochem. J.">
        <title>Enzymatic properties of native and deglycosylated hybrid aspen (Populus tremulaxtremuloides) xyloglucan endotransglycosylase 16A expressed in Pichia pastoris.</title>
        <authorList>
            <person name="Kallas A.M."/>
            <person name="Piens K."/>
            <person name="Denman S.E."/>
            <person name="Henriksson H."/>
            <person name="Faeldt J."/>
            <person name="Johansson P."/>
            <person name="Brumer H."/>
            <person name="Teeri T.T."/>
        </authorList>
    </citation>
    <scope>FUNCTION</scope>
    <scope>CATALYTIC ACTIVITY</scope>
    <scope>BIOPHYSICOCHEMICAL PROPERTIES</scope>
    <scope>GLYCOSYLATION</scope>
    <scope>MUTAGENESIS OF ASN-115</scope>
</reference>
<reference key="6">
    <citation type="journal article" date="2007" name="Plant Cell Physiol.">
        <title>Xyloglucan endo-transglycosylase (XET) functions in gelatinous layers of tension wood fibers in poplar--a glimpse into the mechanism of the balancing act of trees.</title>
        <authorList>
            <person name="Nishikubo N."/>
            <person name="Awano T."/>
            <person name="Banasiak A."/>
            <person name="Bourquin V."/>
            <person name="Ibatullin F."/>
            <person name="Funada R."/>
            <person name="Brumer H."/>
            <person name="Teeri T.T."/>
            <person name="Hayashi T."/>
            <person name="Sundberg B."/>
            <person name="Mellerowicz E.J."/>
        </authorList>
    </citation>
    <scope>FUNCTION</scope>
    <scope>SUBCELLULAR LOCATION</scope>
    <scope>TISSUE SPECIFICITY</scope>
    <scope>DEVELOPMENTAL STAGE</scope>
    <scope>INDUCTION</scope>
</reference>
<reference evidence="24 25" key="7">
    <citation type="journal article" date="2004" name="Plant Cell">
        <title>Crystal structures of a poplar xyloglucan endotransglycosylase reveal details of transglycosylation acceptor binding.</title>
        <authorList>
            <person name="Johansson P."/>
            <person name="Brumer H."/>
            <person name="Baumann M.J."/>
            <person name="Kallas A.M."/>
            <person name="Henriksson H."/>
            <person name="Denman S.E."/>
            <person name="Teeri T.T."/>
            <person name="Jones T.A."/>
        </authorList>
    </citation>
    <scope>X-RAY CRYSTALLOGRAPHY (1.80 ANGSTROMS) OF 23-294 AND IN COMPLEX WITH XYLOGLUCAN NONASACCHARIDE</scope>
    <scope>FUNCTION</scope>
    <scope>CATALYTIC ACTIVITY</scope>
    <scope>PTM</scope>
    <scope>ACTIVE SITES</scope>
    <scope>GLYCOSYLATION AT ASN-115</scope>
    <scope>DISULFIDE BONDS</scope>
    <scope>REACTION MECHANISM OF TRANSGLYCOSYLATION</scope>
    <scope>3D-STRUCTURE MODELING OF XYLOGLUCAN DONOR SACCHARIDE</scope>
</reference>
<keyword id="KW-0002">3D-structure</keyword>
<keyword id="KW-0052">Apoplast</keyword>
<keyword id="KW-0134">Cell wall</keyword>
<keyword id="KW-0961">Cell wall biogenesis/degradation</keyword>
<keyword id="KW-0963">Cytoplasm</keyword>
<keyword id="KW-1015">Disulfide bond</keyword>
<keyword id="KW-0325">Glycoprotein</keyword>
<keyword id="KW-0326">Glycosidase</keyword>
<keyword id="KW-0328">Glycosyltransferase</keyword>
<keyword id="KW-0378">Hydrolase</keyword>
<keyword id="KW-0964">Secreted</keyword>
<keyword id="KW-0732">Signal</keyword>
<keyword id="KW-0808">Transferase</keyword>
<accession>Q8GZD5</accession>
<protein>
    <recommendedName>
        <fullName evidence="21">Xyloglucan endotransglucosylase protein 34</fullName>
        <shortName evidence="21">XET protein 34</shortName>
        <ecNumber evidence="6 8 9 10 11 12">2.4.1.207</ecNumber>
    </recommendedName>
    <alternativeName>
        <fullName evidence="20">PttXET16-34</fullName>
    </alternativeName>
    <alternativeName>
        <fullName evidence="14 16 17 18">PttXET16A</fullName>
    </alternativeName>
    <alternativeName>
        <fullName evidence="21">Xyloglucan endotransglucosylase protein 16A</fullName>
        <shortName evidence="21">XET protein 16A</shortName>
    </alternativeName>
    <alternativeName>
        <fullName evidence="21">Xyloglucan endotransglucosylase/hydrolase protein 34</fullName>
        <shortName evidence="21">XTH protein 34</shortName>
    </alternativeName>
</protein>
<name>XTH34_POPPZ</name>
<dbReference type="EC" id="2.4.1.207" evidence="6 8 9 10 11 12"/>
<dbReference type="EMBL" id="AF515607">
    <property type="protein sequence ID" value="AAN87142.1"/>
    <property type="molecule type" value="mRNA"/>
</dbReference>
<dbReference type="PDB" id="1UMZ">
    <property type="method" value="X-ray"/>
    <property type="resolution" value="1.80 A"/>
    <property type="chains" value="A/B=23-294"/>
</dbReference>
<dbReference type="PDB" id="1UN1">
    <property type="method" value="X-ray"/>
    <property type="resolution" value="2.10 A"/>
    <property type="chains" value="A/B=23-294"/>
</dbReference>
<dbReference type="PDBsum" id="1UMZ"/>
<dbReference type="PDBsum" id="1UN1"/>
<dbReference type="SMR" id="Q8GZD5"/>
<dbReference type="CAZy" id="GH16">
    <property type="family name" value="Glycoside Hydrolase Family 16"/>
</dbReference>
<dbReference type="GlyCosmos" id="Q8GZD5">
    <property type="glycosylation" value="1 site, No reported glycans"/>
</dbReference>
<dbReference type="iPTMnet" id="Q8GZD5"/>
<dbReference type="BRENDA" id="2.4.1.207">
    <property type="organism ID" value="4980"/>
</dbReference>
<dbReference type="EvolutionaryTrace" id="Q8GZD5"/>
<dbReference type="GO" id="GO:0048046">
    <property type="term" value="C:apoplast"/>
    <property type="evidence" value="ECO:0007669"/>
    <property type="project" value="UniProtKB-SubCell"/>
</dbReference>
<dbReference type="GO" id="GO:0005737">
    <property type="term" value="C:cytoplasm"/>
    <property type="evidence" value="ECO:0007669"/>
    <property type="project" value="UniProtKB-SubCell"/>
</dbReference>
<dbReference type="GO" id="GO:0004553">
    <property type="term" value="F:hydrolase activity, hydrolyzing O-glycosyl compounds"/>
    <property type="evidence" value="ECO:0007669"/>
    <property type="project" value="InterPro"/>
</dbReference>
<dbReference type="GO" id="GO:0030247">
    <property type="term" value="F:polysaccharide binding"/>
    <property type="evidence" value="ECO:0000314"/>
    <property type="project" value="UniProtKB"/>
</dbReference>
<dbReference type="GO" id="GO:0016762">
    <property type="term" value="F:xyloglucan:xyloglucosyl transferase activity"/>
    <property type="evidence" value="ECO:0007669"/>
    <property type="project" value="UniProtKB-EC"/>
</dbReference>
<dbReference type="GO" id="GO:0042546">
    <property type="term" value="P:cell wall biogenesis"/>
    <property type="evidence" value="ECO:0007669"/>
    <property type="project" value="InterPro"/>
</dbReference>
<dbReference type="GO" id="GO:0071555">
    <property type="term" value="P:cell wall organization"/>
    <property type="evidence" value="ECO:0007669"/>
    <property type="project" value="UniProtKB-KW"/>
</dbReference>
<dbReference type="GO" id="GO:0010411">
    <property type="term" value="P:xyloglucan metabolic process"/>
    <property type="evidence" value="ECO:0007669"/>
    <property type="project" value="InterPro"/>
</dbReference>
<dbReference type="CDD" id="cd02176">
    <property type="entry name" value="GH16_XET"/>
    <property type="match status" value="1"/>
</dbReference>
<dbReference type="FunFam" id="2.60.120.200:FF:000025">
    <property type="entry name" value="Xyloglucan endotransglucosylase/hydrolase"/>
    <property type="match status" value="1"/>
</dbReference>
<dbReference type="Gene3D" id="2.60.120.200">
    <property type="match status" value="1"/>
</dbReference>
<dbReference type="InterPro" id="IPR044791">
    <property type="entry name" value="Beta-glucanase/XTH"/>
</dbReference>
<dbReference type="InterPro" id="IPR013320">
    <property type="entry name" value="ConA-like_dom_sf"/>
</dbReference>
<dbReference type="InterPro" id="IPR000757">
    <property type="entry name" value="GH16"/>
</dbReference>
<dbReference type="InterPro" id="IPR008263">
    <property type="entry name" value="GH16_AS"/>
</dbReference>
<dbReference type="InterPro" id="IPR010713">
    <property type="entry name" value="XET_C"/>
</dbReference>
<dbReference type="InterPro" id="IPR016455">
    <property type="entry name" value="XTH"/>
</dbReference>
<dbReference type="PANTHER" id="PTHR31062">
    <property type="entry name" value="XYLOGLUCAN ENDOTRANSGLUCOSYLASE/HYDROLASE PROTEIN 8-RELATED"/>
    <property type="match status" value="1"/>
</dbReference>
<dbReference type="Pfam" id="PF00722">
    <property type="entry name" value="Glyco_hydro_16"/>
    <property type="match status" value="1"/>
</dbReference>
<dbReference type="Pfam" id="PF06955">
    <property type="entry name" value="XET_C"/>
    <property type="match status" value="1"/>
</dbReference>
<dbReference type="PIRSF" id="PIRSF005604">
    <property type="entry name" value="XET"/>
    <property type="match status" value="1"/>
</dbReference>
<dbReference type="SUPFAM" id="SSF49899">
    <property type="entry name" value="Concanavalin A-like lectins/glucanases"/>
    <property type="match status" value="1"/>
</dbReference>
<dbReference type="PROSITE" id="PS01034">
    <property type="entry name" value="GH16_1"/>
    <property type="match status" value="1"/>
</dbReference>
<dbReference type="PROSITE" id="PS51762">
    <property type="entry name" value="GH16_2"/>
    <property type="match status" value="1"/>
</dbReference>
<evidence type="ECO:0000255" key="1">
    <source>
        <dbReference type="PIRSR" id="PIRSR005604-1"/>
    </source>
</evidence>
<evidence type="ECO:0000255" key="2">
    <source>
        <dbReference type="PIRSR" id="PIRSR005604-2"/>
    </source>
</evidence>
<evidence type="ECO:0000255" key="3">
    <source>
        <dbReference type="PROSITE-ProRule" id="PRU00498"/>
    </source>
</evidence>
<evidence type="ECO:0000255" key="4">
    <source>
        <dbReference type="PROSITE-ProRule" id="PRU01098"/>
    </source>
</evidence>
<evidence type="ECO:0000255" key="5">
    <source>
        <dbReference type="PROSITE-ProRule" id="PRU10064"/>
    </source>
</evidence>
<evidence type="ECO:0000255" key="6">
    <source>
        <dbReference type="RuleBase" id="RU361120"/>
    </source>
</evidence>
<evidence type="ECO:0000269" key="7">
    <source>
    </source>
</evidence>
<evidence type="ECO:0000269" key="8">
    <source>
    </source>
</evidence>
<evidence type="ECO:0000269" key="9">
    <source>
    </source>
</evidence>
<evidence type="ECO:0000269" key="10">
    <source>
    </source>
</evidence>
<evidence type="ECO:0000269" key="11">
    <source>
    </source>
</evidence>
<evidence type="ECO:0000269" key="12">
    <source>
    </source>
</evidence>
<evidence type="ECO:0000269" key="13">
    <source>
    </source>
</evidence>
<evidence type="ECO:0000303" key="14">
    <source>
    </source>
</evidence>
<evidence type="ECO:0000303" key="15">
    <source>
    </source>
</evidence>
<evidence type="ECO:0000303" key="16">
    <source>
    </source>
</evidence>
<evidence type="ECO:0000303" key="17">
    <source>
    </source>
</evidence>
<evidence type="ECO:0000303" key="18">
    <source>
    </source>
</evidence>
<evidence type="ECO:0000303" key="19">
    <source>
    </source>
</evidence>
<evidence type="ECO:0000303" key="20">
    <source>
    </source>
</evidence>
<evidence type="ECO:0000305" key="21"/>
<evidence type="ECO:0000305" key="22">
    <source>
    </source>
</evidence>
<evidence type="ECO:0000312" key="23">
    <source>
        <dbReference type="EMBL" id="AAN87142.1"/>
    </source>
</evidence>
<evidence type="ECO:0007744" key="24">
    <source>
        <dbReference type="PDB" id="1UMZ"/>
    </source>
</evidence>
<evidence type="ECO:0007744" key="25">
    <source>
        <dbReference type="PDB" id="1UN1"/>
    </source>
</evidence>
<evidence type="ECO:0007829" key="26">
    <source>
        <dbReference type="PDB" id="1UMZ"/>
    </source>
</evidence>
<sequence>MAAAYPWTLFLGMLVMVSGTMGAALRKPVDVAFGRNYVPTWAFDHIKYFNGGNEIQLHLDKYTGTGFQSKGSYLFGHFSMQMKLVPGDSAGTVTAFYLSSQNSEHDEIDFEFLGNRTGQPYILQTNVFTGGKGDREQRIYLWFDPTKEFHYYSVLWNMYMIVFLVDDVPIRVFKNCKDLGVKFPFNQPMKIYSSLWNADDWATRGGLEKTDWSKAPFIASYRSFHIDGCEASVEAKFCATQGARWWDQKEFQDLDAFQYRRLSWVRQKYTIYNYCTDRSRYPSMPPECKRDRDI</sequence>
<gene>
    <name evidence="20" type="primary">XTH16-34</name>
    <name evidence="14 15 16 18 19 20 23" type="synonym">XET16A</name>
</gene>
<comment type="function">
    <text evidence="7 8 9 10 11 12 13">Catalyzes xyloglucan endotransglycosylation (XET). Cleaves and religates xyloglucan polymers (PubMed:12595718, PubMed:15020748, PubMed:15125664, PubMed:15804235, PubMed:16014999). Does not catalyze xyloglucan endohydrolysis (XEH) (PubMed:15804235). Involved in early phases of secondary (S) cell wall formation in fibers of the xylem and phloem vascular tissues of wood stems. May play a role in restructuring primary cell walls, possibly creating and reinforcing the connections between the primary and S cell wall layers (PubMed:12468728). Functions in the gelatinous (G) layers of the tension wood fibers that are involved in bending of the wood stems. May play a role in G fiber shrinking by repairing broken xyloglucan cross-links between G and S2 cell wall layers via its XET activity to maintain connections between the layers (PubMed:17504814).</text>
</comment>
<comment type="catalytic activity">
    <reaction evidence="6 8 9 10 11 12">
        <text>breaks a beta-(1-&gt;4) bond in the backbone of a xyloglucan and transfers the xyloglucanyl segment on to O-4 of the non-reducing terminal glucose residue of an acceptor, which can be a xyloglucan or an oligosaccharide of xyloglucan.</text>
        <dbReference type="EC" id="2.4.1.207"/>
    </reaction>
</comment>
<comment type="biophysicochemical properties">
    <kinetics>
        <KM evidence="11">75 uM for reduced xyloglucan-derived nonasaccharide as acceptor substrate (at pH 5.5 and 25 degrees Celsius)</KM>
        <Vmax evidence="11">42.5 nmol/min/mg enzyme with reduced xyloglucan-derived nonasaccharide as acceptor substrate (at pH 5.5 and 25 degrees Celsius)</Vmax>
    </kinetics>
    <phDependence>
        <text evidence="11">Optimum pH is approximately 5.5. Loses activity rapidly at pH 4-5.</text>
    </phDependence>
    <temperatureDependence>
        <text evidence="11">Optimum temperature is 30-40 degrees Celsius.</text>
    </temperatureDependence>
</comment>
<comment type="subcellular location">
    <subcellularLocation>
        <location evidence="6 7 13">Secreted</location>
        <location evidence="6 7 13">Cell wall</location>
    </subcellularLocation>
    <subcellularLocation>
        <location evidence="6">Secreted</location>
        <location evidence="6">Extracellular space</location>
        <location evidence="6">Apoplast</location>
    </subcellularLocation>
    <subcellularLocation>
        <location evidence="7">Cytoplasm</location>
    </subcellularLocation>
    <text evidence="7">Localizes to the cytoplasm of cambial cells. Localizes to the cytoplasm of xylem fibers in the early stages of secondary cell wall formation.</text>
</comment>
<comment type="tissue specificity">
    <text evidence="7 13">Expressed in mature gelatinous (G) cell wall layer of the tension wood fibers. Highly expressed in the outer zone of the G layer close to the secondary S2 layer. Not expressed in the mature walls of the ray cells or vessel elements (at protein level) (PubMed:17504814). Highest expression in both the phloem/cambium and differentiating xylem of the mature stem containing primarily secondary cell wall forming cells, in root tips and young roots. Expressed at low levels in apical bud (PubMed:12468728).</text>
</comment>
<comment type="developmental stage">
    <text evidence="7 13">Highly expressed in cell walls of developing fibers at the early secondary walled stage of both phloem/cambium and xylem vascular tissues. Not expressed at later stages of secondary wall formation. Expressed in the innermost secondary wall layers of the developing phloem fibers. Expressed in the nacreous walls of developing phloem sieve tubes in the secondary phloem, and more weakly in both fusiform and ray initials of the cambium. Expression in expanding xylem cells is weaker than in the cambium, and developing vessel elements have weaker expression than expanding fibers (at protein level) (PubMed:12468728). Expressed in developing gelatinous (G) cell wall layer of the tension wood fibers (at protein level) (PubMed:17504814). Transiently expressed in developing leaves (PubMed:12468728).</text>
</comment>
<comment type="induction">
    <text evidence="13">Down-regulated in developing tension wood at the primary walled stage.</text>
</comment>
<comment type="PTM">
    <text evidence="6">Contains at least one intrachain disulfide bond essential for its enzymatic activity.</text>
</comment>
<comment type="PTM">
    <text evidence="9 11">N-glycosylated. Contains N-acetylglucosamine and mannose (PubMed:15020748, PubMed:15804235). Glycosylation is not essential for its catalytic activity (PubMed:15804235).</text>
</comment>
<comment type="biotechnology">
    <text evidence="10">This enzyme is used in a developed method for activation of cellulosic materials for industrial applications. Through its transglycosylase activity, chemically modified xyloglucan oligosaccharides are attached to xyloglucan, which has naturally high affinity for cellulose. Then, the chemically modified xyloglucan is adsorbed onto desired cellulosic surfaces. As a result, efficient attachment of a variety of chemical modifications onto cellulose surfaces is attained while the integrity and strength of the fiber is maintained.</text>
</comment>
<comment type="similarity">
    <text evidence="21">Belongs to the glycosyl hydrolase 16 family. XTH group 1 subfamily.</text>
</comment>
<feature type="signal peptide" evidence="6">
    <location>
        <begin position="1"/>
        <end position="22"/>
    </location>
</feature>
<feature type="chain" id="PRO_5005144460" description="Xyloglucan endotransglucosylase protein 34" evidence="6">
    <location>
        <begin position="23"/>
        <end position="294"/>
    </location>
</feature>
<feature type="domain" description="GH16" evidence="4 21">
    <location>
        <begin position="23"/>
        <end position="221"/>
    </location>
</feature>
<feature type="active site" description="Nucleophile" evidence="1 5 22">
    <location>
        <position position="107"/>
    </location>
</feature>
<feature type="active site" description="Proton donor" evidence="1 5 22">
    <location>
        <position position="111"/>
    </location>
</feature>
<feature type="binding site" evidence="9 24">
    <location>
        <position position="111"/>
    </location>
    <ligand>
        <name>xyloglucan</name>
        <dbReference type="ChEBI" id="CHEBI:18233"/>
    </ligand>
</feature>
<feature type="binding site" evidence="9 24">
    <location>
        <begin position="124"/>
        <end position="126"/>
    </location>
    <ligand>
        <name>xyloglucan</name>
        <dbReference type="ChEBI" id="CHEBI:18233"/>
    </ligand>
</feature>
<feature type="binding site" evidence="9 24">
    <location>
        <begin position="134"/>
        <end position="136"/>
    </location>
    <ligand>
        <name>xyloglucan</name>
        <dbReference type="ChEBI" id="CHEBI:18233"/>
    </ligand>
</feature>
<feature type="binding site" evidence="9 24">
    <location>
        <begin position="200"/>
        <end position="201"/>
    </location>
    <ligand>
        <name>xyloglucan</name>
        <dbReference type="ChEBI" id="CHEBI:18233"/>
    </ligand>
</feature>
<feature type="binding site" evidence="9 24">
    <location>
        <position position="205"/>
    </location>
    <ligand>
        <name>xyloglucan</name>
        <dbReference type="ChEBI" id="CHEBI:18233"/>
    </ligand>
</feature>
<feature type="binding site" evidence="9 24">
    <location>
        <position position="280"/>
    </location>
    <ligand>
        <name>xyloglucan</name>
        <dbReference type="ChEBI" id="CHEBI:18233"/>
    </ligand>
</feature>
<feature type="site" description="Important for catalytic activity" evidence="22">
    <location>
        <position position="109"/>
    </location>
</feature>
<feature type="glycosylation site" description="N-linked (GlcNAc...) asparagine" evidence="2 3 9 24 25">
    <location>
        <position position="115"/>
    </location>
</feature>
<feature type="disulfide bond" evidence="9 24 25">
    <location>
        <begin position="229"/>
        <end position="238"/>
    </location>
</feature>
<feature type="disulfide bond" evidence="9 24 25">
    <location>
        <begin position="275"/>
        <end position="288"/>
    </location>
</feature>
<feature type="mutagenesis site" description="No effect on catalytic activity. No significant differences in reaction kinetics compared to wild-type enzyme." evidence="11">
    <original>N</original>
    <variation>S</variation>
    <location>
        <position position="115"/>
    </location>
</feature>
<feature type="helix" evidence="26">
    <location>
        <begin position="33"/>
        <end position="36"/>
    </location>
</feature>
<feature type="strand" evidence="26">
    <location>
        <begin position="37"/>
        <end position="41"/>
    </location>
</feature>
<feature type="helix" evidence="26">
    <location>
        <begin position="43"/>
        <end position="45"/>
    </location>
</feature>
<feature type="strand" evidence="26">
    <location>
        <begin position="46"/>
        <end position="49"/>
    </location>
</feature>
<feature type="helix" evidence="26">
    <location>
        <begin position="50"/>
        <end position="52"/>
    </location>
</feature>
<feature type="strand" evidence="26">
    <location>
        <begin position="54"/>
        <end position="59"/>
    </location>
</feature>
<feature type="strand" evidence="26">
    <location>
        <begin position="65"/>
        <end position="71"/>
    </location>
</feature>
<feature type="strand" evidence="26">
    <location>
        <begin position="73"/>
        <end position="83"/>
    </location>
</feature>
<feature type="strand" evidence="26">
    <location>
        <begin position="92"/>
        <end position="99"/>
    </location>
</feature>
<feature type="strand" evidence="26">
    <location>
        <begin position="101"/>
        <end position="104"/>
    </location>
</feature>
<feature type="strand" evidence="26">
    <location>
        <begin position="107"/>
        <end position="113"/>
    </location>
</feature>
<feature type="strand" evidence="26">
    <location>
        <begin position="122"/>
        <end position="129"/>
    </location>
</feature>
<feature type="strand" evidence="26">
    <location>
        <begin position="137"/>
        <end position="139"/>
    </location>
</feature>
<feature type="turn" evidence="26">
    <location>
        <begin position="145"/>
        <end position="147"/>
    </location>
</feature>
<feature type="strand" evidence="26">
    <location>
        <begin position="150"/>
        <end position="156"/>
    </location>
</feature>
<feature type="strand" evidence="26">
    <location>
        <begin position="158"/>
        <end position="165"/>
    </location>
</feature>
<feature type="strand" evidence="26">
    <location>
        <begin position="168"/>
        <end position="174"/>
    </location>
</feature>
<feature type="helix" evidence="26">
    <location>
        <begin position="177"/>
        <end position="179"/>
    </location>
</feature>
<feature type="strand" evidence="26">
    <location>
        <begin position="189"/>
        <end position="197"/>
    </location>
</feature>
<feature type="turn" evidence="26">
    <location>
        <begin position="199"/>
        <end position="201"/>
    </location>
</feature>
<feature type="helix" evidence="26">
    <location>
        <begin position="204"/>
        <end position="206"/>
    </location>
</feature>
<feature type="helix" evidence="26">
    <location>
        <begin position="212"/>
        <end position="214"/>
    </location>
</feature>
<feature type="strand" evidence="26">
    <location>
        <begin position="217"/>
        <end position="230"/>
    </location>
</feature>
<feature type="strand" evidence="26">
    <location>
        <begin position="233"/>
        <end position="235"/>
    </location>
</feature>
<feature type="turn" evidence="26">
    <location>
        <begin position="239"/>
        <end position="242"/>
    </location>
</feature>
<feature type="helix" evidence="26">
    <location>
        <begin position="245"/>
        <end position="247"/>
    </location>
</feature>
<feature type="helix" evidence="26">
    <location>
        <begin position="249"/>
        <end position="251"/>
    </location>
</feature>
<feature type="helix" evidence="26">
    <location>
        <begin position="256"/>
        <end position="268"/>
    </location>
</feature>
<feature type="strand" evidence="26">
    <location>
        <begin position="270"/>
        <end position="273"/>
    </location>
</feature>
<feature type="helix" evidence="26">
    <location>
        <begin position="274"/>
        <end position="276"/>
    </location>
</feature>
<feature type="turn" evidence="26">
    <location>
        <begin position="278"/>
        <end position="280"/>
    </location>
</feature>
<feature type="helix" evidence="26">
    <location>
        <begin position="287"/>
        <end position="291"/>
    </location>
</feature>
<proteinExistence type="evidence at protein level"/>